<name>MIER1_MOUSE</name>
<evidence type="ECO:0000250" key="1"/>
<evidence type="ECO:0000250" key="2">
    <source>
        <dbReference type="UniProtKB" id="Q8N108"/>
    </source>
</evidence>
<evidence type="ECO:0000255" key="3">
    <source>
        <dbReference type="PROSITE-ProRule" id="PRU00512"/>
    </source>
</evidence>
<evidence type="ECO:0000255" key="4">
    <source>
        <dbReference type="PROSITE-ProRule" id="PRU00624"/>
    </source>
</evidence>
<evidence type="ECO:0000256" key="5">
    <source>
        <dbReference type="SAM" id="MobiDB-lite"/>
    </source>
</evidence>
<evidence type="ECO:0000269" key="6">
    <source>
    </source>
</evidence>
<evidence type="ECO:0000303" key="7">
    <source>
    </source>
</evidence>
<evidence type="ECO:0000303" key="8">
    <source>
    </source>
</evidence>
<evidence type="ECO:0000303" key="9">
    <source>
    </source>
</evidence>
<evidence type="ECO:0000303" key="10">
    <source>
    </source>
</evidence>
<evidence type="ECO:0000305" key="11"/>
<evidence type="ECO:0007744" key="12">
    <source>
    </source>
</evidence>
<evidence type="ECO:0007744" key="13">
    <source>
    </source>
</evidence>
<reference key="1">
    <citation type="journal article" date="2005" name="DNA Seq.">
        <title>Cloning and characterization of the mouse ortholog of mi-er1.</title>
        <authorList>
            <person name="Thorne L.B."/>
            <person name="Grant A.L."/>
            <person name="Paterno G.D."/>
            <person name="Gillespie L.L."/>
        </authorList>
    </citation>
    <scope>NUCLEOTIDE SEQUENCE [MRNA] (ISOFORMS 1; 2; 3 AND 4)</scope>
    <scope>TISSUE SPECIFICITY</scope>
    <scope>FUNCTION</scope>
</reference>
<reference key="2">
    <citation type="journal article" date="2003" name="DNA Res.">
        <title>Prediction of the coding sequences of mouse homologues of KIAA gene: III. The complete nucleotide sequences of 500 mouse KIAA-homologous cDNAs identified by screening of terminal sequences of cDNA clones randomly sampled from size-fractionated libraries.</title>
        <authorList>
            <person name="Okazaki N."/>
            <person name="Kikuno R."/>
            <person name="Ohara R."/>
            <person name="Inamoto S."/>
            <person name="Koseki H."/>
            <person name="Hiraoka S."/>
            <person name="Saga Y."/>
            <person name="Nagase T."/>
            <person name="Ohara O."/>
            <person name="Koga H."/>
        </authorList>
    </citation>
    <scope>NUCLEOTIDE SEQUENCE [LARGE SCALE MRNA] (ISOFORM 2)</scope>
    <source>
        <tissue>Embryonic tail</tissue>
    </source>
</reference>
<reference key="3">
    <citation type="journal article" date="2005" name="Science">
        <title>The transcriptional landscape of the mammalian genome.</title>
        <authorList>
            <person name="Carninci P."/>
            <person name="Kasukawa T."/>
            <person name="Katayama S."/>
            <person name="Gough J."/>
            <person name="Frith M.C."/>
            <person name="Maeda N."/>
            <person name="Oyama R."/>
            <person name="Ravasi T."/>
            <person name="Lenhard B."/>
            <person name="Wells C."/>
            <person name="Kodzius R."/>
            <person name="Shimokawa K."/>
            <person name="Bajic V.B."/>
            <person name="Brenner S.E."/>
            <person name="Batalov S."/>
            <person name="Forrest A.R."/>
            <person name="Zavolan M."/>
            <person name="Davis M.J."/>
            <person name="Wilming L.G."/>
            <person name="Aidinis V."/>
            <person name="Allen J.E."/>
            <person name="Ambesi-Impiombato A."/>
            <person name="Apweiler R."/>
            <person name="Aturaliya R.N."/>
            <person name="Bailey T.L."/>
            <person name="Bansal M."/>
            <person name="Baxter L."/>
            <person name="Beisel K.W."/>
            <person name="Bersano T."/>
            <person name="Bono H."/>
            <person name="Chalk A.M."/>
            <person name="Chiu K.P."/>
            <person name="Choudhary V."/>
            <person name="Christoffels A."/>
            <person name="Clutterbuck D.R."/>
            <person name="Crowe M.L."/>
            <person name="Dalla E."/>
            <person name="Dalrymple B.P."/>
            <person name="de Bono B."/>
            <person name="Della Gatta G."/>
            <person name="di Bernardo D."/>
            <person name="Down T."/>
            <person name="Engstrom P."/>
            <person name="Fagiolini M."/>
            <person name="Faulkner G."/>
            <person name="Fletcher C.F."/>
            <person name="Fukushima T."/>
            <person name="Furuno M."/>
            <person name="Futaki S."/>
            <person name="Gariboldi M."/>
            <person name="Georgii-Hemming P."/>
            <person name="Gingeras T.R."/>
            <person name="Gojobori T."/>
            <person name="Green R.E."/>
            <person name="Gustincich S."/>
            <person name="Harbers M."/>
            <person name="Hayashi Y."/>
            <person name="Hensch T.K."/>
            <person name="Hirokawa N."/>
            <person name="Hill D."/>
            <person name="Huminiecki L."/>
            <person name="Iacono M."/>
            <person name="Ikeo K."/>
            <person name="Iwama A."/>
            <person name="Ishikawa T."/>
            <person name="Jakt M."/>
            <person name="Kanapin A."/>
            <person name="Katoh M."/>
            <person name="Kawasawa Y."/>
            <person name="Kelso J."/>
            <person name="Kitamura H."/>
            <person name="Kitano H."/>
            <person name="Kollias G."/>
            <person name="Krishnan S.P."/>
            <person name="Kruger A."/>
            <person name="Kummerfeld S.K."/>
            <person name="Kurochkin I.V."/>
            <person name="Lareau L.F."/>
            <person name="Lazarevic D."/>
            <person name="Lipovich L."/>
            <person name="Liu J."/>
            <person name="Liuni S."/>
            <person name="McWilliam S."/>
            <person name="Madan Babu M."/>
            <person name="Madera M."/>
            <person name="Marchionni L."/>
            <person name="Matsuda H."/>
            <person name="Matsuzawa S."/>
            <person name="Miki H."/>
            <person name="Mignone F."/>
            <person name="Miyake S."/>
            <person name="Morris K."/>
            <person name="Mottagui-Tabar S."/>
            <person name="Mulder N."/>
            <person name="Nakano N."/>
            <person name="Nakauchi H."/>
            <person name="Ng P."/>
            <person name="Nilsson R."/>
            <person name="Nishiguchi S."/>
            <person name="Nishikawa S."/>
            <person name="Nori F."/>
            <person name="Ohara O."/>
            <person name="Okazaki Y."/>
            <person name="Orlando V."/>
            <person name="Pang K.C."/>
            <person name="Pavan W.J."/>
            <person name="Pavesi G."/>
            <person name="Pesole G."/>
            <person name="Petrovsky N."/>
            <person name="Piazza S."/>
            <person name="Reed J."/>
            <person name="Reid J.F."/>
            <person name="Ring B.Z."/>
            <person name="Ringwald M."/>
            <person name="Rost B."/>
            <person name="Ruan Y."/>
            <person name="Salzberg S.L."/>
            <person name="Sandelin A."/>
            <person name="Schneider C."/>
            <person name="Schoenbach C."/>
            <person name="Sekiguchi K."/>
            <person name="Semple C.A."/>
            <person name="Seno S."/>
            <person name="Sessa L."/>
            <person name="Sheng Y."/>
            <person name="Shibata Y."/>
            <person name="Shimada H."/>
            <person name="Shimada K."/>
            <person name="Silva D."/>
            <person name="Sinclair B."/>
            <person name="Sperling S."/>
            <person name="Stupka E."/>
            <person name="Sugiura K."/>
            <person name="Sultana R."/>
            <person name="Takenaka Y."/>
            <person name="Taki K."/>
            <person name="Tammoja K."/>
            <person name="Tan S.L."/>
            <person name="Tang S."/>
            <person name="Taylor M.S."/>
            <person name="Tegner J."/>
            <person name="Teichmann S.A."/>
            <person name="Ueda H.R."/>
            <person name="van Nimwegen E."/>
            <person name="Verardo R."/>
            <person name="Wei C.L."/>
            <person name="Yagi K."/>
            <person name="Yamanishi H."/>
            <person name="Zabarovsky E."/>
            <person name="Zhu S."/>
            <person name="Zimmer A."/>
            <person name="Hide W."/>
            <person name="Bult C."/>
            <person name="Grimmond S.M."/>
            <person name="Teasdale R.D."/>
            <person name="Liu E.T."/>
            <person name="Brusic V."/>
            <person name="Quackenbush J."/>
            <person name="Wahlestedt C."/>
            <person name="Mattick J.S."/>
            <person name="Hume D.A."/>
            <person name="Kai C."/>
            <person name="Sasaki D."/>
            <person name="Tomaru Y."/>
            <person name="Fukuda S."/>
            <person name="Kanamori-Katayama M."/>
            <person name="Suzuki M."/>
            <person name="Aoki J."/>
            <person name="Arakawa T."/>
            <person name="Iida J."/>
            <person name="Imamura K."/>
            <person name="Itoh M."/>
            <person name="Kato T."/>
            <person name="Kawaji H."/>
            <person name="Kawagashira N."/>
            <person name="Kawashima T."/>
            <person name="Kojima M."/>
            <person name="Kondo S."/>
            <person name="Konno H."/>
            <person name="Nakano K."/>
            <person name="Ninomiya N."/>
            <person name="Nishio T."/>
            <person name="Okada M."/>
            <person name="Plessy C."/>
            <person name="Shibata K."/>
            <person name="Shiraki T."/>
            <person name="Suzuki S."/>
            <person name="Tagami M."/>
            <person name="Waki K."/>
            <person name="Watahiki A."/>
            <person name="Okamura-Oho Y."/>
            <person name="Suzuki H."/>
            <person name="Kawai J."/>
            <person name="Hayashizaki Y."/>
        </authorList>
    </citation>
    <scope>NUCLEOTIDE SEQUENCE [LARGE SCALE MRNA] (ISOFORM 5)</scope>
    <source>
        <strain>C57BL/6J</strain>
        <tissue>Testis</tissue>
    </source>
</reference>
<reference key="4">
    <citation type="journal article" date="2009" name="PLoS Biol.">
        <title>Lineage-specific biology revealed by a finished genome assembly of the mouse.</title>
        <authorList>
            <person name="Church D.M."/>
            <person name="Goodstadt L."/>
            <person name="Hillier L.W."/>
            <person name="Zody M.C."/>
            <person name="Goldstein S."/>
            <person name="She X."/>
            <person name="Bult C.J."/>
            <person name="Agarwala R."/>
            <person name="Cherry J.L."/>
            <person name="DiCuccio M."/>
            <person name="Hlavina W."/>
            <person name="Kapustin Y."/>
            <person name="Meric P."/>
            <person name="Maglott D."/>
            <person name="Birtle Z."/>
            <person name="Marques A.C."/>
            <person name="Graves T."/>
            <person name="Zhou S."/>
            <person name="Teague B."/>
            <person name="Potamousis K."/>
            <person name="Churas C."/>
            <person name="Place M."/>
            <person name="Herschleb J."/>
            <person name="Runnheim R."/>
            <person name="Forrest D."/>
            <person name="Amos-Landgraf J."/>
            <person name="Schwartz D.C."/>
            <person name="Cheng Z."/>
            <person name="Lindblad-Toh K."/>
            <person name="Eichler E.E."/>
            <person name="Ponting C.P."/>
        </authorList>
    </citation>
    <scope>NUCLEOTIDE SEQUENCE [LARGE SCALE GENOMIC DNA]</scope>
    <source>
        <strain>C57BL/6J</strain>
    </source>
</reference>
<reference key="5">
    <citation type="journal article" date="2004" name="Genome Res.">
        <title>The status, quality, and expansion of the NIH full-length cDNA project: the Mammalian Gene Collection (MGC).</title>
        <authorList>
            <consortium name="The MGC Project Team"/>
        </authorList>
    </citation>
    <scope>NUCLEOTIDE SEQUENCE [LARGE SCALE MRNA] (ISOFORM 4)</scope>
</reference>
<reference key="6">
    <citation type="journal article" date="2007" name="Proc. Natl. Acad. Sci. U.S.A.">
        <title>Large-scale phosphorylation analysis of mouse liver.</title>
        <authorList>
            <person name="Villen J."/>
            <person name="Beausoleil S.A."/>
            <person name="Gerber S.A."/>
            <person name="Gygi S.P."/>
        </authorList>
    </citation>
    <scope>PHOSPHORYLATION [LARGE SCALE ANALYSIS] AT SER-482</scope>
    <scope>IDENTIFICATION BY MASS SPECTROMETRY [LARGE SCALE ANALYSIS]</scope>
    <source>
        <tissue>Liver</tissue>
    </source>
</reference>
<reference key="7">
    <citation type="journal article" date="2010" name="Cell">
        <title>A tissue-specific atlas of mouse protein phosphorylation and expression.</title>
        <authorList>
            <person name="Huttlin E.L."/>
            <person name="Jedrychowski M.P."/>
            <person name="Elias J.E."/>
            <person name="Goswami T."/>
            <person name="Rad R."/>
            <person name="Beausoleil S.A."/>
            <person name="Villen J."/>
            <person name="Haas W."/>
            <person name="Sowa M.E."/>
            <person name="Gygi S.P."/>
        </authorList>
    </citation>
    <scope>PHOSPHORYLATION [LARGE SCALE ANALYSIS] AT SER-159; SER-165; SER-376; SER-482 AND SER-487</scope>
    <scope>IDENTIFICATION BY MASS SPECTROMETRY [LARGE SCALE ANALYSIS]</scope>
    <source>
        <tissue>Brain</tissue>
        <tissue>Brown adipose tissue</tissue>
        <tissue>Heart</tissue>
        <tissue>Kidney</tissue>
        <tissue>Lung</tissue>
        <tissue>Spleen</tissue>
        <tissue>Testis</tissue>
    </source>
</reference>
<dbReference type="EMBL" id="AY769435">
    <property type="protein sequence ID" value="AAV37181.1"/>
    <property type="molecule type" value="mRNA"/>
</dbReference>
<dbReference type="EMBL" id="AY769436">
    <property type="protein sequence ID" value="AAV37182.1"/>
    <property type="molecule type" value="mRNA"/>
</dbReference>
<dbReference type="EMBL" id="AY769437">
    <property type="protein sequence ID" value="AAV37183.1"/>
    <property type="molecule type" value="mRNA"/>
</dbReference>
<dbReference type="EMBL" id="AY769438">
    <property type="protein sequence ID" value="AAV37184.1"/>
    <property type="molecule type" value="mRNA"/>
</dbReference>
<dbReference type="EMBL" id="AK129405">
    <property type="protein sequence ID" value="BAC98215.1"/>
    <property type="status" value="ALT_INIT"/>
    <property type="molecule type" value="mRNA"/>
</dbReference>
<dbReference type="EMBL" id="AK016915">
    <property type="protein sequence ID" value="BAB30493.1"/>
    <property type="molecule type" value="mRNA"/>
</dbReference>
<dbReference type="EMBL" id="AL844176">
    <property type="status" value="NOT_ANNOTATED_CDS"/>
    <property type="molecule type" value="Genomic_DNA"/>
</dbReference>
<dbReference type="EMBL" id="BC130227">
    <property type="protein sequence ID" value="AAI30228.1"/>
    <property type="molecule type" value="mRNA"/>
</dbReference>
<dbReference type="CCDS" id="CCDS18408.1">
    <molecule id="Q5UAK0-2"/>
</dbReference>
<dbReference type="CCDS" id="CCDS38825.1">
    <molecule id="Q5UAK0-3"/>
</dbReference>
<dbReference type="CCDS" id="CCDS71432.1">
    <molecule id="Q5UAK0-1"/>
</dbReference>
<dbReference type="RefSeq" id="NP_001034170.1">
    <molecule id="Q5UAK0-3"/>
    <property type="nucleotide sequence ID" value="NM_001039081.3"/>
</dbReference>
<dbReference type="RefSeq" id="NP_001273150.1">
    <molecule id="Q5UAK0-1"/>
    <property type="nucleotide sequence ID" value="NM_001286221.1"/>
</dbReference>
<dbReference type="RefSeq" id="NP_001273151.1">
    <molecule id="Q5UAK0-2"/>
    <property type="nucleotide sequence ID" value="NM_001286222.2"/>
</dbReference>
<dbReference type="RefSeq" id="NP_001273152.1">
    <molecule id="Q5UAK0-4"/>
    <property type="nucleotide sequence ID" value="NM_001286223.1"/>
</dbReference>
<dbReference type="RefSeq" id="NP_001391009.1">
    <molecule id="Q5UAK0-2"/>
    <property type="nucleotide sequence ID" value="NM_001404080.1"/>
</dbReference>
<dbReference type="RefSeq" id="NP_001391010.1">
    <molecule id="Q5UAK0-2"/>
    <property type="nucleotide sequence ID" value="NM_001404081.1"/>
</dbReference>
<dbReference type="RefSeq" id="NP_001391011.1">
    <molecule id="Q5UAK0-2"/>
    <property type="nucleotide sequence ID" value="NM_001404082.1"/>
</dbReference>
<dbReference type="RefSeq" id="NP_001391013.1">
    <molecule id="Q5UAK0-4"/>
    <property type="nucleotide sequence ID" value="NM_001404084.1"/>
</dbReference>
<dbReference type="RefSeq" id="NP_081972.2">
    <molecule id="Q5UAK0-2"/>
    <property type="nucleotide sequence ID" value="NM_027696.4"/>
</dbReference>
<dbReference type="RefSeq" id="XP_006503464.1">
    <molecule id="Q5UAK0-2"/>
    <property type="nucleotide sequence ID" value="XM_006503401.5"/>
</dbReference>
<dbReference type="RefSeq" id="XP_006503465.1">
    <property type="nucleotide sequence ID" value="XM_006503402.1"/>
</dbReference>
<dbReference type="RefSeq" id="XP_036020317.1">
    <molecule id="Q5UAK0-2"/>
    <property type="nucleotide sequence ID" value="XM_036164424.1"/>
</dbReference>
<dbReference type="RefSeq" id="XP_036020319.1">
    <molecule id="Q5UAK0-2"/>
    <property type="nucleotide sequence ID" value="XM_036164426.1"/>
</dbReference>
<dbReference type="SMR" id="Q5UAK0"/>
<dbReference type="BioGRID" id="214509">
    <property type="interactions" value="4"/>
</dbReference>
<dbReference type="FunCoup" id="Q5UAK0">
    <property type="interactions" value="2962"/>
</dbReference>
<dbReference type="STRING" id="10090.ENSMUSP00000095558"/>
<dbReference type="GlyGen" id="Q5UAK0">
    <property type="glycosylation" value="2 sites"/>
</dbReference>
<dbReference type="iPTMnet" id="Q5UAK0"/>
<dbReference type="PhosphoSitePlus" id="Q5UAK0"/>
<dbReference type="jPOST" id="Q5UAK0"/>
<dbReference type="PaxDb" id="10090-ENSMUSP00000102470"/>
<dbReference type="PeptideAtlas" id="Q5UAK0"/>
<dbReference type="ProteomicsDB" id="292326">
    <molecule id="Q5UAK0-3"/>
</dbReference>
<dbReference type="ProteomicsDB" id="292327">
    <molecule id="Q5UAK0-1"/>
</dbReference>
<dbReference type="ProteomicsDB" id="292328">
    <molecule id="Q5UAK0-2"/>
</dbReference>
<dbReference type="ProteomicsDB" id="292329">
    <molecule id="Q5UAK0-4"/>
</dbReference>
<dbReference type="ProteomicsDB" id="292330">
    <molecule id="Q5UAK0-5"/>
</dbReference>
<dbReference type="Antibodypedia" id="9204">
    <property type="antibodies" value="110 antibodies from 21 providers"/>
</dbReference>
<dbReference type="DNASU" id="71148"/>
<dbReference type="Ensembl" id="ENSMUST00000030247.11">
    <molecule id="Q5UAK0-2"/>
    <property type="protein sequence ID" value="ENSMUSP00000030247.5"/>
    <property type="gene ID" value="ENSMUSG00000028522.17"/>
</dbReference>
<dbReference type="Ensembl" id="ENSMUST00000097945.10">
    <molecule id="Q5UAK0-1"/>
    <property type="protein sequence ID" value="ENSMUSP00000095558.4"/>
    <property type="gene ID" value="ENSMUSG00000028522.17"/>
</dbReference>
<dbReference type="Ensembl" id="ENSMUST00000106855.2">
    <molecule id="Q5UAK0-5"/>
    <property type="protein sequence ID" value="ENSMUSP00000102468.2"/>
    <property type="gene ID" value="ENSMUSG00000028522.17"/>
</dbReference>
<dbReference type="Ensembl" id="ENSMUST00000106857.8">
    <molecule id="Q5UAK0-3"/>
    <property type="protein sequence ID" value="ENSMUSP00000102470.2"/>
    <property type="gene ID" value="ENSMUSG00000028522.17"/>
</dbReference>
<dbReference type="Ensembl" id="ENSMUST00000106858.8">
    <molecule id="Q5UAK0-2"/>
    <property type="protein sequence ID" value="ENSMUSP00000102471.2"/>
    <property type="gene ID" value="ENSMUSG00000028522.17"/>
</dbReference>
<dbReference type="GeneID" id="71148"/>
<dbReference type="KEGG" id="mmu:71148"/>
<dbReference type="UCSC" id="uc008txd.2">
    <molecule id="Q5UAK0-2"/>
    <property type="organism name" value="mouse"/>
</dbReference>
<dbReference type="UCSC" id="uc008txf.2">
    <molecule id="Q5UAK0-4"/>
    <property type="organism name" value="mouse"/>
</dbReference>
<dbReference type="UCSC" id="uc008txi.2">
    <molecule id="Q5UAK0-3"/>
    <property type="organism name" value="mouse"/>
</dbReference>
<dbReference type="UCSC" id="uc012dhr.2">
    <molecule id="Q5UAK0-1"/>
    <property type="organism name" value="mouse"/>
</dbReference>
<dbReference type="AGR" id="MGI:1918398"/>
<dbReference type="CTD" id="57708"/>
<dbReference type="MGI" id="MGI:1918398">
    <property type="gene designation" value="Mier1"/>
</dbReference>
<dbReference type="VEuPathDB" id="HostDB:ENSMUSG00000028522"/>
<dbReference type="eggNOG" id="KOG4329">
    <property type="taxonomic scope" value="Eukaryota"/>
</dbReference>
<dbReference type="GeneTree" id="ENSGT01030000234573"/>
<dbReference type="HOGENOM" id="CLU_027202_1_0_1"/>
<dbReference type="InParanoid" id="Q5UAK0"/>
<dbReference type="OMA" id="DCELFER"/>
<dbReference type="TreeFam" id="TF106453"/>
<dbReference type="BioGRID-ORCS" id="71148">
    <property type="hits" value="4 hits in 81 CRISPR screens"/>
</dbReference>
<dbReference type="ChiTaRS" id="Mier1">
    <property type="organism name" value="mouse"/>
</dbReference>
<dbReference type="PRO" id="PR:Q5UAK0"/>
<dbReference type="Proteomes" id="UP000000589">
    <property type="component" value="Chromosome 4"/>
</dbReference>
<dbReference type="RNAct" id="Q5UAK0">
    <property type="molecule type" value="protein"/>
</dbReference>
<dbReference type="Bgee" id="ENSMUSG00000028522">
    <property type="expression patterns" value="Expressed in humerus cartilage element and 225 other cell types or tissues"/>
</dbReference>
<dbReference type="ExpressionAtlas" id="Q5UAK0">
    <property type="expression patterns" value="baseline and differential"/>
</dbReference>
<dbReference type="GO" id="GO:0005654">
    <property type="term" value="C:nucleoplasm"/>
    <property type="evidence" value="ECO:0007669"/>
    <property type="project" value="Ensembl"/>
</dbReference>
<dbReference type="GO" id="GO:0017053">
    <property type="term" value="C:transcription repressor complex"/>
    <property type="evidence" value="ECO:0000250"/>
    <property type="project" value="UniProtKB"/>
</dbReference>
<dbReference type="GO" id="GO:0004407">
    <property type="term" value="F:histone deacetylase activity"/>
    <property type="evidence" value="ECO:0007669"/>
    <property type="project" value="Ensembl"/>
</dbReference>
<dbReference type="GO" id="GO:0042826">
    <property type="term" value="F:histone deacetylase binding"/>
    <property type="evidence" value="ECO:0007669"/>
    <property type="project" value="Ensembl"/>
</dbReference>
<dbReference type="GO" id="GO:0006338">
    <property type="term" value="P:chromatin remodeling"/>
    <property type="evidence" value="ECO:0000250"/>
    <property type="project" value="UniProtKB"/>
</dbReference>
<dbReference type="GO" id="GO:0006355">
    <property type="term" value="P:regulation of DNA-templated transcription"/>
    <property type="evidence" value="ECO:0000250"/>
    <property type="project" value="UniProtKB"/>
</dbReference>
<dbReference type="CDD" id="cd11661">
    <property type="entry name" value="SANT_MTA3_like"/>
    <property type="match status" value="1"/>
</dbReference>
<dbReference type="FunFam" id="1.10.10.60:FF:000025">
    <property type="entry name" value="Mesoderm induction early response 1, transcriptional regulator"/>
    <property type="match status" value="1"/>
</dbReference>
<dbReference type="Gene3D" id="1.10.10.60">
    <property type="entry name" value="Homeodomain-like"/>
    <property type="match status" value="1"/>
</dbReference>
<dbReference type="InterPro" id="IPR000949">
    <property type="entry name" value="ELM2_dom"/>
</dbReference>
<dbReference type="InterPro" id="IPR009057">
    <property type="entry name" value="Homeodomain-like_sf"/>
</dbReference>
<dbReference type="InterPro" id="IPR040138">
    <property type="entry name" value="MIER/MTA"/>
</dbReference>
<dbReference type="InterPro" id="IPR045787">
    <property type="entry name" value="MIER1/3_C"/>
</dbReference>
<dbReference type="InterPro" id="IPR001005">
    <property type="entry name" value="SANT/Myb"/>
</dbReference>
<dbReference type="InterPro" id="IPR017884">
    <property type="entry name" value="SANT_dom"/>
</dbReference>
<dbReference type="PANTHER" id="PTHR10865:SF24">
    <property type="entry name" value="MESODERM INDUCTION EARLY RESPONSE PROTEIN 1"/>
    <property type="match status" value="1"/>
</dbReference>
<dbReference type="PANTHER" id="PTHR10865">
    <property type="entry name" value="METASTASIS-ASSOCIATED PROTEIN AND MESODERM INDUCTION EARLY RESPONSE PROTEIN"/>
    <property type="match status" value="1"/>
</dbReference>
<dbReference type="Pfam" id="PF01448">
    <property type="entry name" value="ELM2"/>
    <property type="match status" value="1"/>
</dbReference>
<dbReference type="Pfam" id="PF19426">
    <property type="entry name" value="MIER1_3_C"/>
    <property type="match status" value="1"/>
</dbReference>
<dbReference type="Pfam" id="PF00249">
    <property type="entry name" value="Myb_DNA-binding"/>
    <property type="match status" value="1"/>
</dbReference>
<dbReference type="SMART" id="SM01189">
    <property type="entry name" value="ELM2"/>
    <property type="match status" value="1"/>
</dbReference>
<dbReference type="SMART" id="SM00717">
    <property type="entry name" value="SANT"/>
    <property type="match status" value="1"/>
</dbReference>
<dbReference type="SUPFAM" id="SSF46689">
    <property type="entry name" value="Homeodomain-like"/>
    <property type="match status" value="1"/>
</dbReference>
<dbReference type="PROSITE" id="PS51156">
    <property type="entry name" value="ELM2"/>
    <property type="match status" value="1"/>
</dbReference>
<dbReference type="PROSITE" id="PS51293">
    <property type="entry name" value="SANT"/>
    <property type="match status" value="1"/>
</dbReference>
<feature type="chain" id="PRO_0000197142" description="Mesoderm induction early response protein 1">
    <location>
        <begin position="1"/>
        <end position="511"/>
    </location>
</feature>
<feature type="domain" description="ELM2" evidence="3">
    <location>
        <begin position="179"/>
        <end position="277"/>
    </location>
</feature>
<feature type="domain" description="SANT" evidence="4">
    <location>
        <begin position="282"/>
        <end position="334"/>
    </location>
</feature>
<feature type="region of interest" description="Disordered" evidence="5">
    <location>
        <begin position="1"/>
        <end position="171"/>
    </location>
</feature>
<feature type="region of interest" description="Disordered" evidence="5">
    <location>
        <begin position="365"/>
        <end position="511"/>
    </location>
</feature>
<feature type="compositionally biased region" description="Low complexity" evidence="5">
    <location>
        <begin position="1"/>
        <end position="16"/>
    </location>
</feature>
<feature type="compositionally biased region" description="Basic and acidic residues" evidence="5">
    <location>
        <begin position="17"/>
        <end position="36"/>
    </location>
</feature>
<feature type="compositionally biased region" description="Acidic residues" evidence="5">
    <location>
        <begin position="37"/>
        <end position="46"/>
    </location>
</feature>
<feature type="compositionally biased region" description="Basic and acidic residues" evidence="5">
    <location>
        <begin position="57"/>
        <end position="66"/>
    </location>
</feature>
<feature type="compositionally biased region" description="Acidic residues" evidence="5">
    <location>
        <begin position="83"/>
        <end position="104"/>
    </location>
</feature>
<feature type="compositionally biased region" description="Polar residues" evidence="5">
    <location>
        <begin position="128"/>
        <end position="143"/>
    </location>
</feature>
<feature type="compositionally biased region" description="Acidic residues" evidence="5">
    <location>
        <begin position="159"/>
        <end position="171"/>
    </location>
</feature>
<feature type="compositionally biased region" description="Polar residues" evidence="5">
    <location>
        <begin position="397"/>
        <end position="408"/>
    </location>
</feature>
<feature type="compositionally biased region" description="Basic and acidic residues" evidence="5">
    <location>
        <begin position="413"/>
        <end position="422"/>
    </location>
</feature>
<feature type="compositionally biased region" description="Basic and acidic residues" evidence="5">
    <location>
        <begin position="461"/>
        <end position="474"/>
    </location>
</feature>
<feature type="compositionally biased region" description="Polar residues" evidence="5">
    <location>
        <begin position="481"/>
        <end position="493"/>
    </location>
</feature>
<feature type="compositionally biased region" description="Basic and acidic residues" evidence="5">
    <location>
        <begin position="499"/>
        <end position="511"/>
    </location>
</feature>
<feature type="modified residue" description="Phosphoserine" evidence="2">
    <location>
        <position position="10"/>
    </location>
</feature>
<feature type="modified residue" description="Phosphoserine" evidence="2">
    <location>
        <position position="140"/>
    </location>
</feature>
<feature type="modified residue" description="Phosphotyrosine" evidence="2">
    <location>
        <position position="154"/>
    </location>
</feature>
<feature type="modified residue" description="Phosphoserine" evidence="13">
    <location>
        <position position="159"/>
    </location>
</feature>
<feature type="modified residue" description="Phosphoserine" evidence="13">
    <location>
        <position position="165"/>
    </location>
</feature>
<feature type="modified residue" description="Phosphoserine" evidence="2">
    <location>
        <position position="366"/>
    </location>
</feature>
<feature type="modified residue" description="Phosphoserine" evidence="2">
    <location>
        <position position="368"/>
    </location>
</feature>
<feature type="modified residue" description="Phosphoserine" evidence="13">
    <location>
        <position position="376"/>
    </location>
</feature>
<feature type="modified residue" description="Phosphoserine" evidence="12 13">
    <location>
        <position position="482"/>
    </location>
</feature>
<feature type="modified residue" description="Phosphoserine" evidence="13">
    <location>
        <position position="487"/>
    </location>
</feature>
<feature type="modified residue" description="Phosphoserine" evidence="2">
    <location>
        <position position="490"/>
    </location>
</feature>
<feature type="cross-link" description="Glycyl lysine isopeptide (Lys-Gly) (interchain with G-Cter in SUMO2)" evidence="2">
    <location>
        <position position="238"/>
    </location>
</feature>
<feature type="cross-link" description="Glycyl lysine isopeptide (Lys-Gly) (interchain with G-Cter in SUMO2)" evidence="2">
    <location>
        <position position="419"/>
    </location>
</feature>
<feature type="splice variant" id="VSP_016174" description="In isoform 5." evidence="9">
    <location>
        <begin position="1"/>
        <end position="181"/>
    </location>
</feature>
<feature type="splice variant" id="VSP_042454" description="In isoform 1." evidence="10">
    <original>MAEPSVESSSP</original>
    <variation>MCIRCLCLIGLQTVSGFFSCQITSHLLSLQVQGEYKCGLLCENTSLLIANVRRKVS</variation>
    <location>
        <begin position="1"/>
        <end position="11"/>
    </location>
</feature>
<feature type="splice variant" id="VSP_016175" description="In isoform 2." evidence="7 10">
    <original>MAE</original>
    <variation>MFMFNWFTDCLWILFLSNYK</variation>
    <location>
        <begin position="1"/>
        <end position="3"/>
    </location>
</feature>
<feature type="splice variant" id="VSP_016177" description="In isoform 4." evidence="8 10">
    <original>MAE</original>
    <variation>ML</variation>
    <location>
        <begin position="1"/>
        <end position="3"/>
    </location>
</feature>
<protein>
    <recommendedName>
        <fullName>Mesoderm induction early response protein 1</fullName>
        <shortName>Early response 1</shortName>
        <shortName>Er1</shortName>
        <shortName>Mi-er1</shortName>
    </recommendedName>
</protein>
<comment type="function">
    <text evidence="6">Transcriptional repressor regulating the expression of a number of genes including SP1 target genes. Probably functions through recruitment of HDAC1 a histone deacetylase involved in chromatin silencing.</text>
</comment>
<comment type="subunit">
    <text evidence="1">Interacts with HDAC1. Part of a complex containing at least CDYL, MIER1, MIER2, HDAC1 and HDAC2.</text>
</comment>
<comment type="subcellular location">
    <subcellularLocation>
        <location evidence="3 4">Nucleus</location>
    </subcellularLocation>
</comment>
<comment type="alternative products">
    <event type="alternative splicing"/>
    <isoform>
        <id>Q5UAK0-3</id>
        <name>3</name>
        <name>N3 beta</name>
        <sequence type="displayed"/>
    </isoform>
    <isoform>
        <id>Q5UAK0-1</id>
        <name>1</name>
        <name>N4 beta</name>
        <sequence type="described" ref="VSP_042454"/>
    </isoform>
    <isoform>
        <id>Q5UAK0-2</id>
        <name>2</name>
        <name>N1 beta</name>
        <sequence type="described" ref="VSP_016175"/>
    </isoform>
    <isoform>
        <id>Q5UAK0-4</id>
        <name>4</name>
        <name>N2 beta</name>
        <sequence type="described" ref="VSP_016177"/>
    </isoform>
    <isoform>
        <id>Q5UAK0-5</id>
        <name>5</name>
        <sequence type="described" ref="VSP_016174"/>
    </isoform>
</comment>
<comment type="tissue specificity">
    <text evidence="6">Ubiquitously expressed. Isoform 1 is only expressed in testis.</text>
</comment>
<comment type="sequence caution" evidence="11">
    <conflict type="erroneous initiation">
        <sequence resource="EMBL-CDS" id="BAC98215"/>
    </conflict>
    <text>Extended N-terminus.</text>
</comment>
<proteinExistence type="evidence at protein level"/>
<organism>
    <name type="scientific">Mus musculus</name>
    <name type="common">Mouse</name>
    <dbReference type="NCBI Taxonomy" id="10090"/>
    <lineage>
        <taxon>Eukaryota</taxon>
        <taxon>Metazoa</taxon>
        <taxon>Chordata</taxon>
        <taxon>Craniata</taxon>
        <taxon>Vertebrata</taxon>
        <taxon>Euteleostomi</taxon>
        <taxon>Mammalia</taxon>
        <taxon>Eutheria</taxon>
        <taxon>Euarchontoglires</taxon>
        <taxon>Glires</taxon>
        <taxon>Rodentia</taxon>
        <taxon>Myomorpha</taxon>
        <taxon>Muroidea</taxon>
        <taxon>Muridae</taxon>
        <taxon>Murinae</taxon>
        <taxon>Mus</taxon>
        <taxon>Mus</taxon>
    </lineage>
</organism>
<sequence length="511" mass="57908">MAEPSVESSSPGGSATSEDHEFDPSADMLVHDFDDERTLEEEEMMEGETNFSSEIEDLAREGDMPIHELLSLYGYDSTVRLPEEEEEEEEEEEGEDDEDADNDDNSGCSGENKEENIKDSSGQEDETQSSNDDPSQSVTSQDAQEIIRPRRCKYFDTNSEIEEESEEDEDYIPSEDWKKEIMVGSMFQAEIPVGVCRYKENEKVYENDDQLLWDPECLPEEKVVVFLKDASRRTGDEKGVEAIPEGSHIKDNEQALYELVKCSFDTEEALRRLRFNVKAAREELSVWTEEECRNFEQGLKAYGKDFHLIQANKVRTRSVGECVAFYYMWKKSERYDFFAQQTRFGKKKYNLHPGVTDYMDRLLDESESAASSRAPSPPPTASNSSNSQSEKEDGAVSSRNQNGVSSNGPGEILNKEEVKVEGLHVNGPTGGNKKPLLTDMDTNGYEANNLTTDPKLAHMTARNENDFDEKNERPAKRRRINSSGKESPGSSEFFQEAVSHGKFEEHENTND</sequence>
<gene>
    <name type="primary">Mier1</name>
    <name type="synonym">Kiaa1610</name>
</gene>
<accession>Q5UAK0</accession>
<accession>A1L3P9</accession>
<accession>B1AY29</accession>
<accession>B1AY34</accession>
<accession>Q5UAK1</accession>
<accession>Q5UAK2</accession>
<accession>Q5UAK3</accession>
<accession>Q6ZPL6</accession>
<accession>Q9D402</accession>
<keyword id="KW-0025">Alternative splicing</keyword>
<keyword id="KW-1017">Isopeptide bond</keyword>
<keyword id="KW-0539">Nucleus</keyword>
<keyword id="KW-0597">Phosphoprotein</keyword>
<keyword id="KW-1185">Reference proteome</keyword>
<keyword id="KW-0678">Repressor</keyword>
<keyword id="KW-0804">Transcription</keyword>
<keyword id="KW-0805">Transcription regulation</keyword>
<keyword id="KW-0832">Ubl conjugation</keyword>